<name>ARGB_XANCP</name>
<reference key="1">
    <citation type="journal article" date="2002" name="Nature">
        <title>Comparison of the genomes of two Xanthomonas pathogens with differing host specificities.</title>
        <authorList>
            <person name="da Silva A.C.R."/>
            <person name="Ferro J.A."/>
            <person name="Reinach F.C."/>
            <person name="Farah C.S."/>
            <person name="Furlan L.R."/>
            <person name="Quaggio R.B."/>
            <person name="Monteiro-Vitorello C.B."/>
            <person name="Van Sluys M.A."/>
            <person name="Almeida N.F. Jr."/>
            <person name="Alves L.M.C."/>
            <person name="do Amaral A.M."/>
            <person name="Bertolini M.C."/>
            <person name="Camargo L.E.A."/>
            <person name="Camarotte G."/>
            <person name="Cannavan F."/>
            <person name="Cardozo J."/>
            <person name="Chambergo F."/>
            <person name="Ciapina L.P."/>
            <person name="Cicarelli R.M.B."/>
            <person name="Coutinho L.L."/>
            <person name="Cursino-Santos J.R."/>
            <person name="El-Dorry H."/>
            <person name="Faria J.B."/>
            <person name="Ferreira A.J.S."/>
            <person name="Ferreira R.C.C."/>
            <person name="Ferro M.I.T."/>
            <person name="Formighieri E.F."/>
            <person name="Franco M.C."/>
            <person name="Greggio C.C."/>
            <person name="Gruber A."/>
            <person name="Katsuyama A.M."/>
            <person name="Kishi L.T."/>
            <person name="Leite R.P."/>
            <person name="Lemos E.G.M."/>
            <person name="Lemos M.V.F."/>
            <person name="Locali E.C."/>
            <person name="Machado M.A."/>
            <person name="Madeira A.M.B.N."/>
            <person name="Martinez-Rossi N.M."/>
            <person name="Martins E.C."/>
            <person name="Meidanis J."/>
            <person name="Menck C.F.M."/>
            <person name="Miyaki C.Y."/>
            <person name="Moon D.H."/>
            <person name="Moreira L.M."/>
            <person name="Novo M.T.M."/>
            <person name="Okura V.K."/>
            <person name="Oliveira M.C."/>
            <person name="Oliveira V.R."/>
            <person name="Pereira H.A."/>
            <person name="Rossi A."/>
            <person name="Sena J.A.D."/>
            <person name="Silva C."/>
            <person name="de Souza R.F."/>
            <person name="Spinola L.A.F."/>
            <person name="Takita M.A."/>
            <person name="Tamura R.E."/>
            <person name="Teixeira E.C."/>
            <person name="Tezza R.I.D."/>
            <person name="Trindade dos Santos M."/>
            <person name="Truffi D."/>
            <person name="Tsai S.M."/>
            <person name="White F.F."/>
            <person name="Setubal J.C."/>
            <person name="Kitajima J.P."/>
        </authorList>
    </citation>
    <scope>NUCLEOTIDE SEQUENCE [LARGE SCALE GENOMIC DNA]</scope>
    <source>
        <strain>ATCC 33913 / DSM 3586 / NCPPB 528 / LMG 568 / P 25</strain>
    </source>
</reference>
<protein>
    <recommendedName>
        <fullName>Acetylglutamate kinase</fullName>
        <ecNumber>2.7.2.8</ecNumber>
    </recommendedName>
    <alternativeName>
        <fullName>N-acetyl-L-glutamate 5-phosphotransferase</fullName>
    </alternativeName>
    <alternativeName>
        <fullName>NAG kinase</fullName>
        <shortName>NAGK</shortName>
    </alternativeName>
</protein>
<proteinExistence type="inferred from homology"/>
<feature type="chain" id="PRO_0000112686" description="Acetylglutamate kinase">
    <location>
        <begin position="1"/>
        <end position="426"/>
    </location>
</feature>
<feature type="domain" description="N-acetyltransferase" evidence="2">
    <location>
        <begin position="274"/>
        <end position="425"/>
    </location>
</feature>
<feature type="region of interest" description="Acetylglutamate kinase">
    <location>
        <begin position="1"/>
        <end position="252"/>
    </location>
</feature>
<feature type="region of interest" description="Unknown">
    <location>
        <begin position="253"/>
        <end position="426"/>
    </location>
</feature>
<feature type="binding site" evidence="1">
    <location>
        <begin position="59"/>
        <end position="60"/>
    </location>
    <ligand>
        <name>substrate</name>
    </ligand>
</feature>
<feature type="binding site" evidence="1">
    <location>
        <position position="81"/>
    </location>
    <ligand>
        <name>substrate</name>
    </ligand>
</feature>
<feature type="binding site" evidence="1">
    <location>
        <position position="170"/>
    </location>
    <ligand>
        <name>substrate</name>
    </ligand>
</feature>
<feature type="site" description="Transition state stabilizer" evidence="1">
    <location>
        <position position="26"/>
    </location>
</feature>
<feature type="site" description="Transition state stabilizer" evidence="1">
    <location>
        <position position="231"/>
    </location>
</feature>
<organism>
    <name type="scientific">Xanthomonas campestris pv. campestris (strain ATCC 33913 / DSM 3586 / NCPPB 528 / LMG 568 / P 25)</name>
    <dbReference type="NCBI Taxonomy" id="190485"/>
    <lineage>
        <taxon>Bacteria</taxon>
        <taxon>Pseudomonadati</taxon>
        <taxon>Pseudomonadota</taxon>
        <taxon>Gammaproteobacteria</taxon>
        <taxon>Lysobacterales</taxon>
        <taxon>Lysobacteraceae</taxon>
        <taxon>Xanthomonas</taxon>
    </lineage>
</organism>
<dbReference type="EC" id="2.7.2.8"/>
<dbReference type="EMBL" id="AE008922">
    <property type="protein sequence ID" value="AAM41524.1"/>
    <property type="status" value="ALT_INIT"/>
    <property type="molecule type" value="Genomic_DNA"/>
</dbReference>
<dbReference type="RefSeq" id="NP_637600.1">
    <property type="nucleotide sequence ID" value="NC_003902.1"/>
</dbReference>
<dbReference type="SMR" id="Q8P8J6"/>
<dbReference type="STRING" id="190485.XCC2245"/>
<dbReference type="EnsemblBacteria" id="AAM41524">
    <property type="protein sequence ID" value="AAM41524"/>
    <property type="gene ID" value="XCC2245"/>
</dbReference>
<dbReference type="KEGG" id="xcc:XCC2245"/>
<dbReference type="PATRIC" id="fig|190485.4.peg.2395"/>
<dbReference type="eggNOG" id="COG0548">
    <property type="taxonomic scope" value="Bacteria"/>
</dbReference>
<dbReference type="HOGENOM" id="CLU_006384_4_1_6"/>
<dbReference type="OrthoDB" id="9803155at2"/>
<dbReference type="BRENDA" id="2.7.2.8">
    <property type="organism ID" value="6708"/>
</dbReference>
<dbReference type="UniPathway" id="UPA00068">
    <property type="reaction ID" value="UER00107"/>
</dbReference>
<dbReference type="Proteomes" id="UP000001010">
    <property type="component" value="Chromosome"/>
</dbReference>
<dbReference type="GO" id="GO:0005737">
    <property type="term" value="C:cytoplasm"/>
    <property type="evidence" value="ECO:0007669"/>
    <property type="project" value="UniProtKB-SubCell"/>
</dbReference>
<dbReference type="GO" id="GO:0003991">
    <property type="term" value="F:acetylglutamate kinase activity"/>
    <property type="evidence" value="ECO:0007669"/>
    <property type="project" value="UniProtKB-EC"/>
</dbReference>
<dbReference type="GO" id="GO:0005524">
    <property type="term" value="F:ATP binding"/>
    <property type="evidence" value="ECO:0007669"/>
    <property type="project" value="UniProtKB-KW"/>
</dbReference>
<dbReference type="GO" id="GO:0004042">
    <property type="term" value="F:L-glutamate N-acetyltransferase activity"/>
    <property type="evidence" value="ECO:0000318"/>
    <property type="project" value="GO_Central"/>
</dbReference>
<dbReference type="GO" id="GO:0006526">
    <property type="term" value="P:L-arginine biosynthetic process"/>
    <property type="evidence" value="ECO:0000318"/>
    <property type="project" value="GO_Central"/>
</dbReference>
<dbReference type="CDD" id="cd04252">
    <property type="entry name" value="AAK_NAGK-fArgBP"/>
    <property type="match status" value="1"/>
</dbReference>
<dbReference type="CDD" id="cd04264">
    <property type="entry name" value="DUF619-NAGS"/>
    <property type="match status" value="1"/>
</dbReference>
<dbReference type="FunFam" id="3.40.630.30:FF:000070">
    <property type="entry name" value="Acetylglutamate kinase"/>
    <property type="match status" value="1"/>
</dbReference>
<dbReference type="FunFam" id="3.40.1160.10:FF:000046">
    <property type="entry name" value="N-acetylglutamate kinase / N-acetylglutamate synthase"/>
    <property type="match status" value="1"/>
</dbReference>
<dbReference type="Gene3D" id="3.40.630.30">
    <property type="match status" value="1"/>
</dbReference>
<dbReference type="Gene3D" id="3.40.1160.10">
    <property type="entry name" value="Acetylglutamate kinase-like"/>
    <property type="match status" value="1"/>
</dbReference>
<dbReference type="InterPro" id="IPR036393">
    <property type="entry name" value="AceGlu_kinase-like_sf"/>
</dbReference>
<dbReference type="InterPro" id="IPR004662">
    <property type="entry name" value="AcgluKinase_fam"/>
</dbReference>
<dbReference type="InterPro" id="IPR016181">
    <property type="entry name" value="Acyl_CoA_acyltransferase"/>
</dbReference>
<dbReference type="InterPro" id="IPR011242">
    <property type="entry name" value="ArgB_GNAT"/>
</dbReference>
<dbReference type="InterPro" id="IPR001048">
    <property type="entry name" value="Asp/Glu/Uridylate_kinase"/>
</dbReference>
<dbReference type="InterPro" id="IPR041734">
    <property type="entry name" value="NAGK-fArgBP"/>
</dbReference>
<dbReference type="InterPro" id="IPR006855">
    <property type="entry name" value="Vertebrate-like_GNAT_dom"/>
</dbReference>
<dbReference type="NCBIfam" id="TIGR00761">
    <property type="entry name" value="argB"/>
    <property type="match status" value="1"/>
</dbReference>
<dbReference type="NCBIfam" id="NF003386">
    <property type="entry name" value="PRK04531.1-1"/>
    <property type="match status" value="1"/>
</dbReference>
<dbReference type="NCBIfam" id="NF003387">
    <property type="entry name" value="PRK04531.1-2"/>
    <property type="match status" value="1"/>
</dbReference>
<dbReference type="PANTHER" id="PTHR23342">
    <property type="entry name" value="N-ACETYLGLUTAMATE SYNTHASE"/>
    <property type="match status" value="1"/>
</dbReference>
<dbReference type="PANTHER" id="PTHR23342:SF0">
    <property type="entry name" value="N-ACETYLGLUTAMATE SYNTHASE, MITOCHONDRIAL"/>
    <property type="match status" value="1"/>
</dbReference>
<dbReference type="Pfam" id="PF00696">
    <property type="entry name" value="AA_kinase"/>
    <property type="match status" value="1"/>
</dbReference>
<dbReference type="Pfam" id="PF04768">
    <property type="entry name" value="NAT"/>
    <property type="match status" value="1"/>
</dbReference>
<dbReference type="PIRSF" id="PIRSF036441">
    <property type="entry name" value="NAGK_DUF619"/>
    <property type="match status" value="1"/>
</dbReference>
<dbReference type="SUPFAM" id="SSF55729">
    <property type="entry name" value="Acyl-CoA N-acyltransferases (Nat)"/>
    <property type="match status" value="1"/>
</dbReference>
<dbReference type="SUPFAM" id="SSF53633">
    <property type="entry name" value="Carbamate kinase-like"/>
    <property type="match status" value="1"/>
</dbReference>
<dbReference type="PROSITE" id="PS51731">
    <property type="entry name" value="GNAT_NAGS"/>
    <property type="match status" value="1"/>
</dbReference>
<evidence type="ECO:0000250" key="1"/>
<evidence type="ECO:0000255" key="2">
    <source>
        <dbReference type="PROSITE-ProRule" id="PRU00532"/>
    </source>
</evidence>
<evidence type="ECO:0000305" key="3"/>
<keyword id="KW-0028">Amino-acid biosynthesis</keyword>
<keyword id="KW-0055">Arginine biosynthesis</keyword>
<keyword id="KW-0067">ATP-binding</keyword>
<keyword id="KW-0963">Cytoplasm</keyword>
<keyword id="KW-0418">Kinase</keyword>
<keyword id="KW-0547">Nucleotide-binding</keyword>
<keyword id="KW-1185">Reference proteome</keyword>
<keyword id="KW-0808">Transferase</keyword>
<gene>
    <name type="primary">argB</name>
    <name type="ordered locus">XCC2245</name>
</gene>
<comment type="catalytic activity">
    <reaction>
        <text>N-acetyl-L-glutamate + ATP = N-acetyl-L-glutamyl 5-phosphate + ADP</text>
        <dbReference type="Rhea" id="RHEA:14629"/>
        <dbReference type="ChEBI" id="CHEBI:30616"/>
        <dbReference type="ChEBI" id="CHEBI:44337"/>
        <dbReference type="ChEBI" id="CHEBI:57936"/>
        <dbReference type="ChEBI" id="CHEBI:456216"/>
        <dbReference type="EC" id="2.7.2.8"/>
    </reaction>
</comment>
<comment type="pathway">
    <text>Amino-acid biosynthesis; L-arginine biosynthesis; N(2)-acetyl-L-ornithine from L-glutamate: step 2/4.</text>
</comment>
<comment type="subcellular location">
    <subcellularLocation>
        <location evidence="1">Cytoplasm</location>
    </subcellularLocation>
</comment>
<comment type="similarity">
    <text evidence="3">In the N-terminal section; belongs to the acetylglutamate kinase family. ArgB subfamily.</text>
</comment>
<comment type="sequence caution" evidence="3">
    <conflict type="erroneous initiation">
        <sequence resource="EMBL-CDS" id="AAM41524"/>
    </conflict>
</comment>
<sequence length="426" mass="46953">MASAKEISQYLKRFSQLDAKRFAVVKVGGAVLRDDLEALTSSLSFLQEVGLTPIVLHGAGPQLDAELSAAGIEKQTVNGLRVTSPHALAIVRKVFQASNLKLVEALQQNGARATSITGGVFEAEYLNRDTYGLVGEVKAVNLAPIEASLQAGSIPVITSLGETPSGQILNVNADFAANELVQELQPYKIIFLTGTGGLLDAEGKLIDSINLSTEYDHLMQQPWINGGMRVKIEQIKDLLDRLPLESSVSITRPADLAKELFTHKGSGTLVRRGERVLRATSWDELDLPRLTSLIESSFGRTLVPDYFSNTKLLRAYVSENYRAAVILTDEGMLGASALIYLDKFAVLDDAQGEGLGRAVWNVMREETPQLFWRSRHNNQVNIFYYAESDGCIKQEKWKVFWYGLENFEQIQHCVAHCATRQPTLLG</sequence>
<accession>Q8P8J6</accession>